<accession>A8WX89</accession>
<name>TPC13_CAEBR</name>
<sequence>MTENISNSSTQQLLALRVMRLARPKFAPLDGFSHDPVDPTGFGELLAGKVAEISKESRHDLPIGEYLIAPQMFENIYLGETFTFYVNVVNESESNVVNVSLKCELQTSTQRVVLPCSVQDVTIESTKCDGQVISHEVKEIGQHILICSVNYKTLSGENMYFRKFFKFPVSKPIDVKTKFYSAEDNANQDVYLEAQIENTSNSNMFLERVELDPSQHYKVTSISHEDEFPEVGKLLKPKDIRQFLFCLSPVDVNNTLGYKDLTSIGKLDMSWRTSMGEKGRLQTSALQRIAPGYGDVRLSVEKTPACVDVQKPFEVACRLYNCSERALDLQLRLEQPSNRQLVICSPSGVSLGQLPPSRYVDFALNVFPVAVGIQSISGIRITDTFTKRHYEHDDIAQIFVS</sequence>
<organism>
    <name type="scientific">Caenorhabditis briggsae</name>
    <dbReference type="NCBI Taxonomy" id="6238"/>
    <lineage>
        <taxon>Eukaryota</taxon>
        <taxon>Metazoa</taxon>
        <taxon>Ecdysozoa</taxon>
        <taxon>Nematoda</taxon>
        <taxon>Chromadorea</taxon>
        <taxon>Rhabditida</taxon>
        <taxon>Rhabditina</taxon>
        <taxon>Rhabditomorpha</taxon>
        <taxon>Rhabditoidea</taxon>
        <taxon>Rhabditidae</taxon>
        <taxon>Peloderinae</taxon>
        <taxon>Caenorhabditis</taxon>
    </lineage>
</organism>
<keyword id="KW-1185">Reference proteome</keyword>
<proteinExistence type="inferred from homology"/>
<gene>
    <name type="ORF">CBG04321</name>
</gene>
<comment type="similarity">
    <text evidence="1">Belongs to the TRAPPC13 family.</text>
</comment>
<dbReference type="EMBL" id="HE600920">
    <property type="protein sequence ID" value="CAP25053.3"/>
    <property type="molecule type" value="Genomic_DNA"/>
</dbReference>
<dbReference type="RefSeq" id="XP_045092642.1">
    <property type="nucleotide sequence ID" value="XM_045242051.1"/>
</dbReference>
<dbReference type="FunCoup" id="A8WX89">
    <property type="interactions" value="2148"/>
</dbReference>
<dbReference type="STRING" id="6238.A8WX89"/>
<dbReference type="EnsemblMetazoa" id="CBG04321.1">
    <property type="protein sequence ID" value="CBG04321.1"/>
    <property type="gene ID" value="WBGene00027022"/>
</dbReference>
<dbReference type="GeneID" id="8571897"/>
<dbReference type="WormBase" id="CBG04321">
    <property type="protein sequence ID" value="CBP37576"/>
    <property type="gene ID" value="WBGene00027022"/>
</dbReference>
<dbReference type="eggNOG" id="KOG2625">
    <property type="taxonomic scope" value="Eukaryota"/>
</dbReference>
<dbReference type="HOGENOM" id="CLU_027041_0_0_1"/>
<dbReference type="InParanoid" id="A8WX89"/>
<dbReference type="OMA" id="YLCVHNG"/>
<dbReference type="Proteomes" id="UP000008549">
    <property type="component" value="Unassembled WGS sequence"/>
</dbReference>
<dbReference type="GO" id="GO:1990072">
    <property type="term" value="C:TRAPPIII protein complex"/>
    <property type="evidence" value="ECO:0000318"/>
    <property type="project" value="GO_Central"/>
</dbReference>
<dbReference type="InterPro" id="IPR010378">
    <property type="entry name" value="TRAPPC13"/>
</dbReference>
<dbReference type="InterPro" id="IPR055428">
    <property type="entry name" value="TRAPPC13_C"/>
</dbReference>
<dbReference type="InterPro" id="IPR055429">
    <property type="entry name" value="TRAPPC13_M"/>
</dbReference>
<dbReference type="InterPro" id="IPR055427">
    <property type="entry name" value="TRAPPC13_N"/>
</dbReference>
<dbReference type="PANTHER" id="PTHR13134">
    <property type="entry name" value="TRAFFICKING PROTEIN PARTICLE COMPLEX SUBUNIT 13"/>
    <property type="match status" value="1"/>
</dbReference>
<dbReference type="PANTHER" id="PTHR13134:SF3">
    <property type="entry name" value="TRAFFICKING PROTEIN PARTICLE COMPLEX SUBUNIT 13"/>
    <property type="match status" value="1"/>
</dbReference>
<dbReference type="Pfam" id="PF23643">
    <property type="entry name" value="TRAPPC13_C"/>
    <property type="match status" value="1"/>
</dbReference>
<dbReference type="Pfam" id="PF23647">
    <property type="entry name" value="TRAPPC13_M"/>
    <property type="match status" value="1"/>
</dbReference>
<dbReference type="Pfam" id="PF06159">
    <property type="entry name" value="TRAPPC13_N"/>
    <property type="match status" value="1"/>
</dbReference>
<feature type="chain" id="PRO_0000321554" description="Probable trafficking protein particle complex subunit 13 homolog">
    <location>
        <begin position="1"/>
        <end position="401"/>
    </location>
</feature>
<reference key="1">
    <citation type="journal article" date="2003" name="PLoS Biol.">
        <title>The genome sequence of Caenorhabditis briggsae: a platform for comparative genomics.</title>
        <authorList>
            <person name="Stein L.D."/>
            <person name="Bao Z."/>
            <person name="Blasiar D."/>
            <person name="Blumenthal T."/>
            <person name="Brent M.R."/>
            <person name="Chen N."/>
            <person name="Chinwalla A."/>
            <person name="Clarke L."/>
            <person name="Clee C."/>
            <person name="Coghlan A."/>
            <person name="Coulson A."/>
            <person name="D'Eustachio P."/>
            <person name="Fitch D.H.A."/>
            <person name="Fulton L.A."/>
            <person name="Fulton R.E."/>
            <person name="Griffiths-Jones S."/>
            <person name="Harris T.W."/>
            <person name="Hillier L.W."/>
            <person name="Kamath R."/>
            <person name="Kuwabara P.E."/>
            <person name="Mardis E.R."/>
            <person name="Marra M.A."/>
            <person name="Miner T.L."/>
            <person name="Minx P."/>
            <person name="Mullikin J.C."/>
            <person name="Plumb R.W."/>
            <person name="Rogers J."/>
            <person name="Schein J.E."/>
            <person name="Sohrmann M."/>
            <person name="Spieth J."/>
            <person name="Stajich J.E."/>
            <person name="Wei C."/>
            <person name="Willey D."/>
            <person name="Wilson R.K."/>
            <person name="Durbin R.M."/>
            <person name="Waterston R.H."/>
        </authorList>
    </citation>
    <scope>NUCLEOTIDE SEQUENCE [LARGE SCALE GENOMIC DNA]</scope>
    <source>
        <strain>AF16</strain>
    </source>
</reference>
<evidence type="ECO:0000305" key="1"/>
<protein>
    <recommendedName>
        <fullName>Probable trafficking protein particle complex subunit 13 homolog</fullName>
    </recommendedName>
</protein>